<evidence type="ECO:0000255" key="1">
    <source>
        <dbReference type="HAMAP-Rule" id="MF_00185"/>
    </source>
</evidence>
<gene>
    <name evidence="1" type="primary">miaA</name>
    <name type="ordered locus">CLL_A1817</name>
</gene>
<name>MIAA_CLOBB</name>
<proteinExistence type="inferred from homology"/>
<dbReference type="EC" id="2.5.1.75" evidence="1"/>
<dbReference type="EMBL" id="CP001056">
    <property type="protein sequence ID" value="ACD24643.1"/>
    <property type="molecule type" value="Genomic_DNA"/>
</dbReference>
<dbReference type="SMR" id="B2TIB7"/>
<dbReference type="KEGG" id="cbk:CLL_A1817"/>
<dbReference type="PATRIC" id="fig|935198.13.peg.1763"/>
<dbReference type="HOGENOM" id="CLU_032616_0_1_9"/>
<dbReference type="Proteomes" id="UP000001195">
    <property type="component" value="Chromosome"/>
</dbReference>
<dbReference type="GO" id="GO:0005524">
    <property type="term" value="F:ATP binding"/>
    <property type="evidence" value="ECO:0007669"/>
    <property type="project" value="UniProtKB-UniRule"/>
</dbReference>
<dbReference type="GO" id="GO:0052381">
    <property type="term" value="F:tRNA dimethylallyltransferase activity"/>
    <property type="evidence" value="ECO:0007669"/>
    <property type="project" value="UniProtKB-UniRule"/>
</dbReference>
<dbReference type="GO" id="GO:0006400">
    <property type="term" value="P:tRNA modification"/>
    <property type="evidence" value="ECO:0007669"/>
    <property type="project" value="TreeGrafter"/>
</dbReference>
<dbReference type="FunFam" id="1.10.20.140:FF:000001">
    <property type="entry name" value="tRNA dimethylallyltransferase"/>
    <property type="match status" value="1"/>
</dbReference>
<dbReference type="Gene3D" id="1.10.20.140">
    <property type="match status" value="1"/>
</dbReference>
<dbReference type="Gene3D" id="3.40.50.300">
    <property type="entry name" value="P-loop containing nucleotide triphosphate hydrolases"/>
    <property type="match status" value="1"/>
</dbReference>
<dbReference type="HAMAP" id="MF_00185">
    <property type="entry name" value="IPP_trans"/>
    <property type="match status" value="1"/>
</dbReference>
<dbReference type="InterPro" id="IPR039657">
    <property type="entry name" value="Dimethylallyltransferase"/>
</dbReference>
<dbReference type="InterPro" id="IPR018022">
    <property type="entry name" value="IPT"/>
</dbReference>
<dbReference type="InterPro" id="IPR027417">
    <property type="entry name" value="P-loop_NTPase"/>
</dbReference>
<dbReference type="NCBIfam" id="TIGR00174">
    <property type="entry name" value="miaA"/>
    <property type="match status" value="1"/>
</dbReference>
<dbReference type="PANTHER" id="PTHR11088">
    <property type="entry name" value="TRNA DIMETHYLALLYLTRANSFERASE"/>
    <property type="match status" value="1"/>
</dbReference>
<dbReference type="PANTHER" id="PTHR11088:SF60">
    <property type="entry name" value="TRNA DIMETHYLALLYLTRANSFERASE"/>
    <property type="match status" value="1"/>
</dbReference>
<dbReference type="Pfam" id="PF01715">
    <property type="entry name" value="IPPT"/>
    <property type="match status" value="1"/>
</dbReference>
<dbReference type="SUPFAM" id="SSF52540">
    <property type="entry name" value="P-loop containing nucleoside triphosphate hydrolases"/>
    <property type="match status" value="2"/>
</dbReference>
<comment type="function">
    <text evidence="1">Catalyzes the transfer of a dimethylallyl group onto the adenine at position 37 in tRNAs that read codons beginning with uridine, leading to the formation of N6-(dimethylallyl)adenosine (i(6)A).</text>
</comment>
<comment type="catalytic activity">
    <reaction evidence="1">
        <text>adenosine(37) in tRNA + dimethylallyl diphosphate = N(6)-dimethylallyladenosine(37) in tRNA + diphosphate</text>
        <dbReference type="Rhea" id="RHEA:26482"/>
        <dbReference type="Rhea" id="RHEA-COMP:10162"/>
        <dbReference type="Rhea" id="RHEA-COMP:10375"/>
        <dbReference type="ChEBI" id="CHEBI:33019"/>
        <dbReference type="ChEBI" id="CHEBI:57623"/>
        <dbReference type="ChEBI" id="CHEBI:74411"/>
        <dbReference type="ChEBI" id="CHEBI:74415"/>
        <dbReference type="EC" id="2.5.1.75"/>
    </reaction>
</comment>
<comment type="cofactor">
    <cofactor evidence="1">
        <name>Mg(2+)</name>
        <dbReference type="ChEBI" id="CHEBI:18420"/>
    </cofactor>
</comment>
<comment type="subunit">
    <text evidence="1">Monomer.</text>
</comment>
<comment type="similarity">
    <text evidence="1">Belongs to the IPP transferase family.</text>
</comment>
<accession>B2TIB7</accession>
<reference key="1">
    <citation type="submission" date="2008-04" db="EMBL/GenBank/DDBJ databases">
        <title>Complete sequence of Clostridium botulinum strain Eklund.</title>
        <authorList>
            <person name="Brinkac L.M."/>
            <person name="Brown J.L."/>
            <person name="Bruce D."/>
            <person name="Detter C."/>
            <person name="Munk C."/>
            <person name="Smith L.A."/>
            <person name="Smith T.J."/>
            <person name="Sutton G."/>
            <person name="Brettin T.S."/>
        </authorList>
    </citation>
    <scope>NUCLEOTIDE SEQUENCE [LARGE SCALE GENOMIC DNA]</scope>
    <source>
        <strain>Eklund 17B / Type B</strain>
    </source>
</reference>
<feature type="chain" id="PRO_1000098656" description="tRNA dimethylallyltransferase">
    <location>
        <begin position="1"/>
        <end position="309"/>
    </location>
</feature>
<feature type="region of interest" description="Interaction with substrate tRNA" evidence="1">
    <location>
        <begin position="35"/>
        <end position="38"/>
    </location>
</feature>
<feature type="binding site" evidence="1">
    <location>
        <begin position="10"/>
        <end position="17"/>
    </location>
    <ligand>
        <name>ATP</name>
        <dbReference type="ChEBI" id="CHEBI:30616"/>
    </ligand>
</feature>
<feature type="binding site" evidence="1">
    <location>
        <begin position="12"/>
        <end position="17"/>
    </location>
    <ligand>
        <name>substrate</name>
    </ligand>
</feature>
<feature type="site" description="Interaction with substrate tRNA" evidence="1">
    <location>
        <position position="101"/>
    </location>
</feature>
<feature type="site" description="Interaction with substrate tRNA" evidence="1">
    <location>
        <position position="124"/>
    </location>
</feature>
<organism>
    <name type="scientific">Clostridium botulinum (strain Eklund 17B / Type B)</name>
    <dbReference type="NCBI Taxonomy" id="935198"/>
    <lineage>
        <taxon>Bacteria</taxon>
        <taxon>Bacillati</taxon>
        <taxon>Bacillota</taxon>
        <taxon>Clostridia</taxon>
        <taxon>Eubacteriales</taxon>
        <taxon>Clostridiaceae</taxon>
        <taxon>Clostridium</taxon>
    </lineage>
</organism>
<sequence>MKQKILVLGGPTAVGKTELSIKLAEKLNGEILSADSMQIYKKMDIGSAKVTKEEMRDINHHMIDIVSPEEEFSVADFKNIGEKAIKEIIAKEKLPMIVGGTGLYINSLTCNVTFTESEKDDEYRTYLESLAEANGNNYVHEMLREIDEISYRDIHPNNRKRVIRALEVYKISGKPFSSYNAGNDFYKTDYHVFYYVLTMDREKLYDRINKRVDIMIENGLIDECIELKKLGYTSSMQSMQGIGYKEILYYLDKKISLYEAVNLIKQGSRNYAKRQLTWFRRDPRCTFLDKDVLSDKEILSKIVDDITNN</sequence>
<protein>
    <recommendedName>
        <fullName evidence="1">tRNA dimethylallyltransferase</fullName>
        <ecNumber evidence="1">2.5.1.75</ecNumber>
    </recommendedName>
    <alternativeName>
        <fullName evidence="1">Dimethylallyl diphosphate:tRNA dimethylallyltransferase</fullName>
        <shortName evidence="1">DMAPP:tRNA dimethylallyltransferase</shortName>
        <shortName evidence="1">DMATase</shortName>
    </alternativeName>
    <alternativeName>
        <fullName evidence="1">Isopentenyl-diphosphate:tRNA isopentenyltransferase</fullName>
        <shortName evidence="1">IPP transferase</shortName>
        <shortName evidence="1">IPPT</shortName>
        <shortName evidence="1">IPTase</shortName>
    </alternativeName>
</protein>
<keyword id="KW-0067">ATP-binding</keyword>
<keyword id="KW-0460">Magnesium</keyword>
<keyword id="KW-0547">Nucleotide-binding</keyword>
<keyword id="KW-0808">Transferase</keyword>
<keyword id="KW-0819">tRNA processing</keyword>